<protein>
    <recommendedName>
        <fullName evidence="1">Phosphomethylpyrimidine synthase</fullName>
        <ecNumber evidence="1">4.1.99.17</ecNumber>
    </recommendedName>
    <alternativeName>
        <fullName evidence="1">Hydroxymethylpyrimidine phosphate synthase</fullName>
        <shortName evidence="1">HMP-P synthase</shortName>
        <shortName evidence="1">HMP-phosphate synthase</shortName>
        <shortName evidence="1">HMPP synthase</shortName>
    </alternativeName>
    <alternativeName>
        <fullName evidence="1">Thiamine biosynthesis protein ThiC</fullName>
    </alternativeName>
</protein>
<organism>
    <name type="scientific">Cupriavidus necator (strain ATCC 17699 / DSM 428 / KCTC 22496 / NCIMB 10442 / H16 / Stanier 337)</name>
    <name type="common">Ralstonia eutropha</name>
    <dbReference type="NCBI Taxonomy" id="381666"/>
    <lineage>
        <taxon>Bacteria</taxon>
        <taxon>Pseudomonadati</taxon>
        <taxon>Pseudomonadota</taxon>
        <taxon>Betaproteobacteria</taxon>
        <taxon>Burkholderiales</taxon>
        <taxon>Burkholderiaceae</taxon>
        <taxon>Cupriavidus</taxon>
    </lineage>
</organism>
<accession>Q0KF34</accession>
<keyword id="KW-0004">4Fe-4S</keyword>
<keyword id="KW-0408">Iron</keyword>
<keyword id="KW-0411">Iron-sulfur</keyword>
<keyword id="KW-0456">Lyase</keyword>
<keyword id="KW-0479">Metal-binding</keyword>
<keyword id="KW-1185">Reference proteome</keyword>
<keyword id="KW-0949">S-adenosyl-L-methionine</keyword>
<keyword id="KW-0784">Thiamine biosynthesis</keyword>
<keyword id="KW-0862">Zinc</keyword>
<comment type="function">
    <text evidence="1">Catalyzes the synthesis of the hydroxymethylpyrimidine phosphate (HMP-P) moiety of thiamine from aminoimidazole ribotide (AIR) in a radical S-adenosyl-L-methionine (SAM)-dependent reaction.</text>
</comment>
<comment type="catalytic activity">
    <reaction evidence="1">
        <text>5-amino-1-(5-phospho-beta-D-ribosyl)imidazole + S-adenosyl-L-methionine = 4-amino-2-methyl-5-(phosphooxymethyl)pyrimidine + CO + 5'-deoxyadenosine + formate + L-methionine + 3 H(+)</text>
        <dbReference type="Rhea" id="RHEA:24840"/>
        <dbReference type="ChEBI" id="CHEBI:15378"/>
        <dbReference type="ChEBI" id="CHEBI:15740"/>
        <dbReference type="ChEBI" id="CHEBI:17245"/>
        <dbReference type="ChEBI" id="CHEBI:17319"/>
        <dbReference type="ChEBI" id="CHEBI:57844"/>
        <dbReference type="ChEBI" id="CHEBI:58354"/>
        <dbReference type="ChEBI" id="CHEBI:59789"/>
        <dbReference type="ChEBI" id="CHEBI:137981"/>
        <dbReference type="EC" id="4.1.99.17"/>
    </reaction>
</comment>
<comment type="cofactor">
    <cofactor evidence="1">
        <name>[4Fe-4S] cluster</name>
        <dbReference type="ChEBI" id="CHEBI:49883"/>
    </cofactor>
    <text evidence="1">Binds 1 [4Fe-4S] cluster per subunit. The cluster is coordinated with 3 cysteines and an exchangeable S-adenosyl-L-methionine.</text>
</comment>
<comment type="pathway">
    <text evidence="1">Cofactor biosynthesis; thiamine diphosphate biosynthesis.</text>
</comment>
<comment type="subunit">
    <text evidence="1">Homodimer.</text>
</comment>
<comment type="similarity">
    <text evidence="1">Belongs to the ThiC family.</text>
</comment>
<dbReference type="EC" id="4.1.99.17" evidence="1"/>
<dbReference type="EMBL" id="AM260479">
    <property type="protein sequence ID" value="CAJ91387.1"/>
    <property type="molecule type" value="Genomic_DNA"/>
</dbReference>
<dbReference type="RefSeq" id="WP_010813323.1">
    <property type="nucleotide sequence ID" value="NZ_CP039287.1"/>
</dbReference>
<dbReference type="SMR" id="Q0KF34"/>
<dbReference type="STRING" id="381666.H16_A0235"/>
<dbReference type="KEGG" id="reh:H16_A0235"/>
<dbReference type="eggNOG" id="COG0422">
    <property type="taxonomic scope" value="Bacteria"/>
</dbReference>
<dbReference type="HOGENOM" id="CLU_013181_2_1_4"/>
<dbReference type="OrthoDB" id="9805897at2"/>
<dbReference type="UniPathway" id="UPA00060"/>
<dbReference type="Proteomes" id="UP000008210">
    <property type="component" value="Chromosome 1"/>
</dbReference>
<dbReference type="GO" id="GO:0005829">
    <property type="term" value="C:cytosol"/>
    <property type="evidence" value="ECO:0007669"/>
    <property type="project" value="TreeGrafter"/>
</dbReference>
<dbReference type="GO" id="GO:0051539">
    <property type="term" value="F:4 iron, 4 sulfur cluster binding"/>
    <property type="evidence" value="ECO:0007669"/>
    <property type="project" value="UniProtKB-KW"/>
</dbReference>
<dbReference type="GO" id="GO:0016830">
    <property type="term" value="F:carbon-carbon lyase activity"/>
    <property type="evidence" value="ECO:0007669"/>
    <property type="project" value="InterPro"/>
</dbReference>
<dbReference type="GO" id="GO:0008270">
    <property type="term" value="F:zinc ion binding"/>
    <property type="evidence" value="ECO:0007669"/>
    <property type="project" value="UniProtKB-UniRule"/>
</dbReference>
<dbReference type="GO" id="GO:0009228">
    <property type="term" value="P:thiamine biosynthetic process"/>
    <property type="evidence" value="ECO:0007669"/>
    <property type="project" value="UniProtKB-KW"/>
</dbReference>
<dbReference type="GO" id="GO:0009229">
    <property type="term" value="P:thiamine diphosphate biosynthetic process"/>
    <property type="evidence" value="ECO:0007669"/>
    <property type="project" value="UniProtKB-UniRule"/>
</dbReference>
<dbReference type="FunFam" id="3.20.20.540:FF:000001">
    <property type="entry name" value="Phosphomethylpyrimidine synthase"/>
    <property type="match status" value="1"/>
</dbReference>
<dbReference type="Gene3D" id="6.10.250.620">
    <property type="match status" value="1"/>
</dbReference>
<dbReference type="Gene3D" id="3.20.20.540">
    <property type="entry name" value="Radical SAM ThiC family, central domain"/>
    <property type="match status" value="1"/>
</dbReference>
<dbReference type="HAMAP" id="MF_00089">
    <property type="entry name" value="ThiC"/>
    <property type="match status" value="1"/>
</dbReference>
<dbReference type="InterPro" id="IPR037509">
    <property type="entry name" value="ThiC"/>
</dbReference>
<dbReference type="InterPro" id="IPR025747">
    <property type="entry name" value="ThiC-associated_dom"/>
</dbReference>
<dbReference type="InterPro" id="IPR038521">
    <property type="entry name" value="ThiC/Bza_core_dom"/>
</dbReference>
<dbReference type="InterPro" id="IPR002817">
    <property type="entry name" value="ThiC/BzaA/B"/>
</dbReference>
<dbReference type="NCBIfam" id="NF006763">
    <property type="entry name" value="PRK09284.1"/>
    <property type="match status" value="1"/>
</dbReference>
<dbReference type="NCBIfam" id="NF009895">
    <property type="entry name" value="PRK13352.1"/>
    <property type="match status" value="1"/>
</dbReference>
<dbReference type="NCBIfam" id="TIGR00190">
    <property type="entry name" value="thiC"/>
    <property type="match status" value="1"/>
</dbReference>
<dbReference type="PANTHER" id="PTHR30557:SF1">
    <property type="entry name" value="PHOSPHOMETHYLPYRIMIDINE SYNTHASE, CHLOROPLASTIC"/>
    <property type="match status" value="1"/>
</dbReference>
<dbReference type="PANTHER" id="PTHR30557">
    <property type="entry name" value="THIAMINE BIOSYNTHESIS PROTEIN THIC"/>
    <property type="match status" value="1"/>
</dbReference>
<dbReference type="Pfam" id="PF13667">
    <property type="entry name" value="ThiC-associated"/>
    <property type="match status" value="1"/>
</dbReference>
<dbReference type="Pfam" id="PF01964">
    <property type="entry name" value="ThiC_Rad_SAM"/>
    <property type="match status" value="1"/>
</dbReference>
<dbReference type="SFLD" id="SFLDF00407">
    <property type="entry name" value="phosphomethylpyrimidine_syntha"/>
    <property type="match status" value="1"/>
</dbReference>
<dbReference type="SFLD" id="SFLDG01114">
    <property type="entry name" value="phosphomethylpyrimidine_syntha"/>
    <property type="match status" value="1"/>
</dbReference>
<dbReference type="SFLD" id="SFLDS00113">
    <property type="entry name" value="Radical_SAM_Phosphomethylpyrim"/>
    <property type="match status" value="1"/>
</dbReference>
<feature type="chain" id="PRO_1000004796" description="Phosphomethylpyrimidine synthase">
    <location>
        <begin position="1"/>
        <end position="626"/>
    </location>
</feature>
<feature type="binding site" evidence="1">
    <location>
        <position position="237"/>
    </location>
    <ligand>
        <name>substrate</name>
    </ligand>
</feature>
<feature type="binding site" evidence="1">
    <location>
        <position position="266"/>
    </location>
    <ligand>
        <name>substrate</name>
    </ligand>
</feature>
<feature type="binding site" evidence="1">
    <location>
        <position position="295"/>
    </location>
    <ligand>
        <name>substrate</name>
    </ligand>
</feature>
<feature type="binding site" evidence="1">
    <location>
        <position position="331"/>
    </location>
    <ligand>
        <name>substrate</name>
    </ligand>
</feature>
<feature type="binding site" evidence="1">
    <location>
        <begin position="351"/>
        <end position="353"/>
    </location>
    <ligand>
        <name>substrate</name>
    </ligand>
</feature>
<feature type="binding site" evidence="1">
    <location>
        <begin position="392"/>
        <end position="395"/>
    </location>
    <ligand>
        <name>substrate</name>
    </ligand>
</feature>
<feature type="binding site" evidence="1">
    <location>
        <position position="431"/>
    </location>
    <ligand>
        <name>substrate</name>
    </ligand>
</feature>
<feature type="binding site" evidence="1">
    <location>
        <position position="435"/>
    </location>
    <ligand>
        <name>Zn(2+)</name>
        <dbReference type="ChEBI" id="CHEBI:29105"/>
    </ligand>
</feature>
<feature type="binding site" evidence="1">
    <location>
        <position position="458"/>
    </location>
    <ligand>
        <name>substrate</name>
    </ligand>
</feature>
<feature type="binding site" evidence="1">
    <location>
        <position position="499"/>
    </location>
    <ligand>
        <name>Zn(2+)</name>
        <dbReference type="ChEBI" id="CHEBI:29105"/>
    </ligand>
</feature>
<feature type="binding site" evidence="1">
    <location>
        <position position="579"/>
    </location>
    <ligand>
        <name>[4Fe-4S] cluster</name>
        <dbReference type="ChEBI" id="CHEBI:49883"/>
        <note>4Fe-4S-S-AdoMet</note>
    </ligand>
</feature>
<feature type="binding site" evidence="1">
    <location>
        <position position="582"/>
    </location>
    <ligand>
        <name>[4Fe-4S] cluster</name>
        <dbReference type="ChEBI" id="CHEBI:49883"/>
        <note>4Fe-4S-S-AdoMet</note>
    </ligand>
</feature>
<feature type="binding site" evidence="1">
    <location>
        <position position="587"/>
    </location>
    <ligand>
        <name>[4Fe-4S] cluster</name>
        <dbReference type="ChEBI" id="CHEBI:49883"/>
        <note>4Fe-4S-S-AdoMet</note>
    </ligand>
</feature>
<evidence type="ECO:0000255" key="1">
    <source>
        <dbReference type="HAMAP-Rule" id="MF_00089"/>
    </source>
</evidence>
<reference key="1">
    <citation type="journal article" date="2006" name="Nat. Biotechnol.">
        <title>Genome sequence of the bioplastic-producing 'Knallgas' bacterium Ralstonia eutropha H16.</title>
        <authorList>
            <person name="Pohlmann A."/>
            <person name="Fricke W.F."/>
            <person name="Reinecke F."/>
            <person name="Kusian B."/>
            <person name="Liesegang H."/>
            <person name="Cramm R."/>
            <person name="Eitinger T."/>
            <person name="Ewering C."/>
            <person name="Poetter M."/>
            <person name="Schwartz E."/>
            <person name="Strittmatter A."/>
            <person name="Voss I."/>
            <person name="Gottschalk G."/>
            <person name="Steinbuechel A."/>
            <person name="Friedrich B."/>
            <person name="Bowien B."/>
        </authorList>
    </citation>
    <scope>NUCLEOTIDE SEQUENCE [LARGE SCALE GENOMIC DNA]</scope>
    <source>
        <strain>ATCC 17699 / DSM 428 / KCTC 22496 / NCIMB 10442 / H16 / Stanier 337</strain>
    </source>
</reference>
<proteinExistence type="inferred from homology"/>
<name>THIC_CUPNH</name>
<gene>
    <name evidence="1" type="primary">thiC</name>
    <name type="ordered locus">H16_A0235</name>
</gene>
<sequence>MARTAPAASFESLESDLDQKFAYPASSKTYLTGSRPDIRVPLRTILQTSTRTDKGEMQNPPIPVYDTSGPYSDPDVHIDLKAGLPAVRAKWIEERGDTEVLPGLSSEYGRDRANDPATAHLRFAQLTNPRRAKAGANVSQMHYARKGIITPEMEYVALRESLNLQALYDKPDYKALLRQHPGNALGAGLPLRPEDITPEFVRQEIASGRAIIPANINHTELEPMAIGRNFRVKINGNLGNSAVTSSLAEEVEKMVWSIRWGADTIMDLSTGKHIHETREWILRNSPVPIGTVPIYQALDKTGGIAEDLTWEMFRDTLIEQAEQGVDYFTIHAGVLLRYVPLTADRVTGIVSRGGSIMAKWCLAHHKENFLYTHFDEICEIMKAYDVSFSLGDGLRPGCIADSNDDAQFGELRTLGELTAKAWKHDVQVMIEGPGHVPLQRIQANMDEELKHCYEAPFYTLGPLVTDIAPGYDHITSGIGAANIGWMGTAMLCYVTPKEHLGLPDKEDVREGIITYKIAAHAADLAKGWPGAQLRDNALSKARFEFRWEDQFNLGLDPERARSYHDATLPAEGAKIAHFCSMCGPKFCSMKITQEVRDYAASLPKEAQQGMEEKSIEFLKKGSKIYS</sequence>